<keyword id="KW-0007">Acetylation</keyword>
<keyword id="KW-0324">Glycolysis</keyword>
<keyword id="KW-0378">Hydrolase</keyword>
<keyword id="KW-0413">Isomerase</keyword>
<keyword id="KW-0597">Phosphoprotein</keyword>
<keyword id="KW-1185">Reference proteome</keyword>
<reference key="1">
    <citation type="submission" date="2005-06" db="EMBL/GenBank/DDBJ databases">
        <title>DNA sequences of macaque genes expressed in brain or testis and its evolutionary implications.</title>
        <authorList>
            <consortium name="International consortium for macaque cDNA sequencing and analysis"/>
        </authorList>
    </citation>
    <scope>NUCLEOTIDE SEQUENCE [LARGE SCALE MRNA]</scope>
    <source>
        <tissue>Testis</tissue>
    </source>
</reference>
<sequence length="259" mass="30014">MSKYKLIMLRHGEGAWNKENRFCSWVDQKLNSEGMEEARNCGKQLKALNFEFDLVFTSVLNRSIHTAWLILEELGQEWVPVESSWRLNERHYGALIGLNREQMALNHGEEQVRLWRRSYNITPPPIEESHPYYHEIYNDRRYKVCDVPLDQLPRSESLKDVLERLLPYWNERIAPEVLRGKTVLISAHGNSSRALLKHLEGISDEDIINITLPTGVPILLELDENLRAVGPHQFLGDQEAIQAAIKKVEDQGKVKQAKK</sequence>
<proteinExistence type="evidence at transcript level"/>
<name>PMGE_MACFA</name>
<protein>
    <recommendedName>
        <fullName>Bisphosphoglycerate mutase</fullName>
        <shortName>BPGM</shortName>
        <ecNumber evidence="1">5.4.2.4</ecNumber>
    </recommendedName>
    <alternativeName>
        <fullName>2,3-bisphosphoglycerate mutase, erythrocyte</fullName>
    </alternativeName>
    <alternativeName>
        <fullName>2,3-bisphosphoglycerate synthase</fullName>
        <ecNumber evidence="1">5.4.2.11</ecNumber>
    </alternativeName>
    <alternativeName>
        <fullName>BPG-dependent PGAM</fullName>
    </alternativeName>
</protein>
<gene>
    <name type="primary">BPGM</name>
    <name type="ORF">QtsA-17708</name>
</gene>
<evidence type="ECO:0000250" key="1">
    <source>
        <dbReference type="UniProtKB" id="P07738"/>
    </source>
</evidence>
<evidence type="ECO:0000305" key="2"/>
<dbReference type="EC" id="5.4.2.4" evidence="1"/>
<dbReference type="EC" id="5.4.2.11" evidence="1"/>
<dbReference type="EMBL" id="AB169166">
    <property type="protein sequence ID" value="BAE01258.1"/>
    <property type="molecule type" value="mRNA"/>
</dbReference>
<dbReference type="RefSeq" id="NP_001272064.1">
    <property type="nucleotide sequence ID" value="NM_001285135.1"/>
</dbReference>
<dbReference type="RefSeq" id="XP_005550884.3">
    <property type="nucleotide sequence ID" value="XM_005550827.4"/>
</dbReference>
<dbReference type="RefSeq" id="XP_045243392.2">
    <property type="nucleotide sequence ID" value="XM_045387457.2"/>
</dbReference>
<dbReference type="SMR" id="Q4R6L7"/>
<dbReference type="STRING" id="9541.ENSMFAP00000040194"/>
<dbReference type="GeneID" id="101925598"/>
<dbReference type="KEGG" id="mcf:101925598"/>
<dbReference type="CTD" id="669"/>
<dbReference type="VEuPathDB" id="HostDB:ENSMFAG00000046266"/>
<dbReference type="eggNOG" id="KOG0235">
    <property type="taxonomic scope" value="Eukaryota"/>
</dbReference>
<dbReference type="OMA" id="TGWHDVP"/>
<dbReference type="Proteomes" id="UP000233100">
    <property type="component" value="Chromosome 3"/>
</dbReference>
<dbReference type="GO" id="GO:0004082">
    <property type="term" value="F:bisphosphoglycerate mutase activity"/>
    <property type="evidence" value="ECO:0007669"/>
    <property type="project" value="UniProtKB-EC"/>
</dbReference>
<dbReference type="GO" id="GO:0016787">
    <property type="term" value="F:hydrolase activity"/>
    <property type="evidence" value="ECO:0007669"/>
    <property type="project" value="UniProtKB-KW"/>
</dbReference>
<dbReference type="GO" id="GO:0004619">
    <property type="term" value="F:phosphoglycerate mutase activity"/>
    <property type="evidence" value="ECO:0007669"/>
    <property type="project" value="UniProtKB-EC"/>
</dbReference>
<dbReference type="GO" id="GO:0006096">
    <property type="term" value="P:glycolytic process"/>
    <property type="evidence" value="ECO:0007669"/>
    <property type="project" value="UniProtKB-KW"/>
</dbReference>
<dbReference type="CDD" id="cd07067">
    <property type="entry name" value="HP_PGM_like"/>
    <property type="match status" value="1"/>
</dbReference>
<dbReference type="FunFam" id="3.40.50.1240:FF:000012">
    <property type="entry name" value="Phosphoglycerate mutase 1"/>
    <property type="match status" value="1"/>
</dbReference>
<dbReference type="Gene3D" id="3.40.50.1240">
    <property type="entry name" value="Phosphoglycerate mutase-like"/>
    <property type="match status" value="1"/>
</dbReference>
<dbReference type="HAMAP" id="MF_01039">
    <property type="entry name" value="PGAM_GpmA"/>
    <property type="match status" value="1"/>
</dbReference>
<dbReference type="InterPro" id="IPR013078">
    <property type="entry name" value="His_Pase_superF_clade-1"/>
</dbReference>
<dbReference type="InterPro" id="IPR029033">
    <property type="entry name" value="His_PPase_superfam"/>
</dbReference>
<dbReference type="InterPro" id="IPR001345">
    <property type="entry name" value="PG/BPGM_mutase_AS"/>
</dbReference>
<dbReference type="InterPro" id="IPR005952">
    <property type="entry name" value="Phosphogly_mut1"/>
</dbReference>
<dbReference type="NCBIfam" id="TIGR01258">
    <property type="entry name" value="pgm_1"/>
    <property type="match status" value="1"/>
</dbReference>
<dbReference type="NCBIfam" id="NF010713">
    <property type="entry name" value="PRK14115.1"/>
    <property type="match status" value="1"/>
</dbReference>
<dbReference type="PANTHER" id="PTHR11931">
    <property type="entry name" value="PHOSPHOGLYCERATE MUTASE"/>
    <property type="match status" value="1"/>
</dbReference>
<dbReference type="Pfam" id="PF00300">
    <property type="entry name" value="His_Phos_1"/>
    <property type="match status" value="2"/>
</dbReference>
<dbReference type="PIRSF" id="PIRSF000709">
    <property type="entry name" value="6PFK_2-Ptase"/>
    <property type="match status" value="1"/>
</dbReference>
<dbReference type="SMART" id="SM00855">
    <property type="entry name" value="PGAM"/>
    <property type="match status" value="1"/>
</dbReference>
<dbReference type="SUPFAM" id="SSF53254">
    <property type="entry name" value="Phosphoglycerate mutase-like"/>
    <property type="match status" value="1"/>
</dbReference>
<dbReference type="PROSITE" id="PS00175">
    <property type="entry name" value="PG_MUTASE"/>
    <property type="match status" value="1"/>
</dbReference>
<accession>Q4R6L7</accession>
<comment type="function">
    <text evidence="1">Plays a major role in regulating hemoglobin oxygen affinity by controlling the levels of its allosteric effector 2,3-bisphosphoglycerate (2,3-BPG). Also exhibits mutase (EC 5.4.2.11) activity.</text>
</comment>
<comment type="catalytic activity">
    <reaction evidence="1">
        <text>(2R)-3-phospho-glyceroyl phosphate = (2R)-2,3-bisphosphoglycerate + H(+)</text>
        <dbReference type="Rhea" id="RHEA:17765"/>
        <dbReference type="ChEBI" id="CHEBI:15378"/>
        <dbReference type="ChEBI" id="CHEBI:57604"/>
        <dbReference type="ChEBI" id="CHEBI:58248"/>
        <dbReference type="EC" id="5.4.2.4"/>
    </reaction>
</comment>
<comment type="catalytic activity">
    <reaction evidence="1">
        <text>(2R)-2-phosphoglycerate = (2R)-3-phosphoglycerate</text>
        <dbReference type="Rhea" id="RHEA:15901"/>
        <dbReference type="ChEBI" id="CHEBI:58272"/>
        <dbReference type="ChEBI" id="CHEBI:58289"/>
        <dbReference type="EC" id="5.4.2.11"/>
    </reaction>
</comment>
<comment type="activity regulation">
    <text evidence="1">At alkaline pH BPGM favors the synthase reaction; however, at lower pH the phosphatase reaction is dominant. Inhibited by citrate.</text>
</comment>
<comment type="subunit">
    <text evidence="1">Homodimer.</text>
</comment>
<comment type="similarity">
    <text evidence="2">Belongs to the phosphoglycerate mutase family. BPG-dependent PGAM subfamily.</text>
</comment>
<organism>
    <name type="scientific">Macaca fascicularis</name>
    <name type="common">Crab-eating macaque</name>
    <name type="synonym">Cynomolgus monkey</name>
    <dbReference type="NCBI Taxonomy" id="9541"/>
    <lineage>
        <taxon>Eukaryota</taxon>
        <taxon>Metazoa</taxon>
        <taxon>Chordata</taxon>
        <taxon>Craniata</taxon>
        <taxon>Vertebrata</taxon>
        <taxon>Euteleostomi</taxon>
        <taxon>Mammalia</taxon>
        <taxon>Eutheria</taxon>
        <taxon>Euarchontoglires</taxon>
        <taxon>Primates</taxon>
        <taxon>Haplorrhini</taxon>
        <taxon>Catarrhini</taxon>
        <taxon>Cercopithecidae</taxon>
        <taxon>Cercopithecinae</taxon>
        <taxon>Macaca</taxon>
    </lineage>
</organism>
<feature type="initiator methionine" description="Removed" evidence="1">
    <location>
        <position position="1"/>
    </location>
</feature>
<feature type="chain" id="PRO_0000268184" description="Bisphosphoglycerate mutase">
    <location>
        <begin position="2"/>
        <end position="259"/>
    </location>
</feature>
<feature type="active site" description="Tele-phosphohistidine intermediate" evidence="1">
    <location>
        <position position="11"/>
    </location>
</feature>
<feature type="active site" description="Proton donor/acceptor" evidence="1">
    <location>
        <position position="89"/>
    </location>
</feature>
<feature type="binding site" evidence="1">
    <location>
        <begin position="10"/>
        <end position="17"/>
    </location>
    <ligand>
        <name>substrate</name>
    </ligand>
</feature>
<feature type="binding site" evidence="1">
    <location>
        <begin position="23"/>
        <end position="24"/>
    </location>
    <ligand>
        <name>substrate</name>
    </ligand>
</feature>
<feature type="binding site" evidence="1">
    <location>
        <position position="62"/>
    </location>
    <ligand>
        <name>substrate</name>
    </ligand>
</feature>
<feature type="binding site" evidence="1">
    <location>
        <begin position="89"/>
        <end position="92"/>
    </location>
    <ligand>
        <name>substrate</name>
    </ligand>
</feature>
<feature type="binding site" evidence="1">
    <location>
        <position position="100"/>
    </location>
    <ligand>
        <name>substrate</name>
    </ligand>
</feature>
<feature type="binding site" evidence="1">
    <location>
        <begin position="116"/>
        <end position="117"/>
    </location>
    <ligand>
        <name>substrate</name>
    </ligand>
</feature>
<feature type="binding site" evidence="1">
    <location>
        <begin position="189"/>
        <end position="190"/>
    </location>
    <ligand>
        <name>substrate</name>
    </ligand>
</feature>
<feature type="site" description="Transition state stabilizer" evidence="1">
    <location>
        <position position="188"/>
    </location>
</feature>
<feature type="modified residue" description="N-acetylserine" evidence="1">
    <location>
        <position position="2"/>
    </location>
</feature>
<feature type="modified residue" description="Phosphothreonine" evidence="1">
    <location>
        <position position="122"/>
    </location>
</feature>